<keyword id="KW-0997">Cell inner membrane</keyword>
<keyword id="KW-1003">Cell membrane</keyword>
<keyword id="KW-0472">Membrane</keyword>
<keyword id="KW-1185">Reference proteome</keyword>
<keyword id="KW-0808">Transferase</keyword>
<keyword id="KW-0812">Transmembrane</keyword>
<keyword id="KW-1133">Transmembrane helix</keyword>
<organism>
    <name type="scientific">Idiomarina loihiensis (strain ATCC BAA-735 / DSM 15497 / L2-TR)</name>
    <dbReference type="NCBI Taxonomy" id="283942"/>
    <lineage>
        <taxon>Bacteria</taxon>
        <taxon>Pseudomonadati</taxon>
        <taxon>Pseudomonadota</taxon>
        <taxon>Gammaproteobacteria</taxon>
        <taxon>Alteromonadales</taxon>
        <taxon>Idiomarinaceae</taxon>
        <taxon>Idiomarina</taxon>
    </lineage>
</organism>
<comment type="function">
    <text evidence="1">Catalyzes the transfer of the diacylglyceryl group from phosphatidylglycerol to the sulfhydryl group of the N-terminal cysteine of a prolipoprotein, the first step in the formation of mature lipoproteins.</text>
</comment>
<comment type="catalytic activity">
    <reaction evidence="1">
        <text>L-cysteinyl-[prolipoprotein] + a 1,2-diacyl-sn-glycero-3-phospho-(1'-sn-glycerol) = an S-1,2-diacyl-sn-glyceryl-L-cysteinyl-[prolipoprotein] + sn-glycerol 1-phosphate + H(+)</text>
        <dbReference type="Rhea" id="RHEA:56712"/>
        <dbReference type="Rhea" id="RHEA-COMP:14679"/>
        <dbReference type="Rhea" id="RHEA-COMP:14680"/>
        <dbReference type="ChEBI" id="CHEBI:15378"/>
        <dbReference type="ChEBI" id="CHEBI:29950"/>
        <dbReference type="ChEBI" id="CHEBI:57685"/>
        <dbReference type="ChEBI" id="CHEBI:64716"/>
        <dbReference type="ChEBI" id="CHEBI:140658"/>
        <dbReference type="EC" id="2.5.1.145"/>
    </reaction>
</comment>
<comment type="pathway">
    <text evidence="1">Protein modification; lipoprotein biosynthesis (diacylglyceryl transfer).</text>
</comment>
<comment type="subcellular location">
    <subcellularLocation>
        <location evidence="1">Cell inner membrane</location>
        <topology evidence="1">Multi-pass membrane protein</topology>
    </subcellularLocation>
</comment>
<comment type="similarity">
    <text evidence="1">Belongs to the Lgt family.</text>
</comment>
<gene>
    <name evidence="1" type="primary">lgt</name>
    <name type="ordered locus">IL0506</name>
</gene>
<evidence type="ECO:0000255" key="1">
    <source>
        <dbReference type="HAMAP-Rule" id="MF_01147"/>
    </source>
</evidence>
<feature type="chain" id="PRO_0000172614" description="Phosphatidylglycerol--prolipoprotein diacylglyceryl transferase">
    <location>
        <begin position="1"/>
        <end position="266"/>
    </location>
</feature>
<feature type="transmembrane region" description="Helical" evidence="1">
    <location>
        <begin position="19"/>
        <end position="39"/>
    </location>
</feature>
<feature type="transmembrane region" description="Helical" evidence="1">
    <location>
        <begin position="61"/>
        <end position="81"/>
    </location>
</feature>
<feature type="transmembrane region" description="Helical" evidence="1">
    <location>
        <begin position="91"/>
        <end position="111"/>
    </location>
</feature>
<feature type="transmembrane region" description="Helical" evidence="1">
    <location>
        <begin position="125"/>
        <end position="145"/>
    </location>
</feature>
<feature type="transmembrane region" description="Helical" evidence="1">
    <location>
        <begin position="176"/>
        <end position="196"/>
    </location>
</feature>
<feature type="transmembrane region" description="Helical" evidence="1">
    <location>
        <begin position="204"/>
        <end position="224"/>
    </location>
</feature>
<feature type="transmembrane region" description="Helical" evidence="1">
    <location>
        <begin position="237"/>
        <end position="257"/>
    </location>
</feature>
<feature type="binding site" evidence="1">
    <location>
        <position position="144"/>
    </location>
    <ligand>
        <name>a 1,2-diacyl-sn-glycero-3-phospho-(1'-sn-glycerol)</name>
        <dbReference type="ChEBI" id="CHEBI:64716"/>
    </ligand>
</feature>
<name>LGT_IDILO</name>
<reference key="1">
    <citation type="journal article" date="2004" name="Proc. Natl. Acad. Sci. U.S.A.">
        <title>Genome sequence of the deep-sea gamma-proteobacterium Idiomarina loihiensis reveals amino acid fermentation as a source of carbon and energy.</title>
        <authorList>
            <person name="Hou S."/>
            <person name="Saw J.H."/>
            <person name="Lee K.S."/>
            <person name="Freitas T.A."/>
            <person name="Belisle C."/>
            <person name="Kawarabayasi Y."/>
            <person name="Donachie S.P."/>
            <person name="Pikina A."/>
            <person name="Galperin M.Y."/>
            <person name="Koonin E.V."/>
            <person name="Makarova K.S."/>
            <person name="Omelchenko M.V."/>
            <person name="Sorokin A."/>
            <person name="Wolf Y.I."/>
            <person name="Li Q.X."/>
            <person name="Keum Y.S."/>
            <person name="Campbell S."/>
            <person name="Denery J."/>
            <person name="Aizawa S."/>
            <person name="Shibata S."/>
            <person name="Malahoff A."/>
            <person name="Alam M."/>
        </authorList>
    </citation>
    <scope>NUCLEOTIDE SEQUENCE [LARGE SCALE GENOMIC DNA]</scope>
    <source>
        <strain>ATCC BAA-735 / DSM 15497 / L2-TR</strain>
    </source>
</reference>
<dbReference type="EC" id="2.5.1.145" evidence="1"/>
<dbReference type="EMBL" id="AE017340">
    <property type="protein sequence ID" value="AAV81349.1"/>
    <property type="molecule type" value="Genomic_DNA"/>
</dbReference>
<dbReference type="RefSeq" id="WP_011233766.1">
    <property type="nucleotide sequence ID" value="NC_006512.1"/>
</dbReference>
<dbReference type="SMR" id="Q5R065"/>
<dbReference type="STRING" id="283942.IL0506"/>
<dbReference type="GeneID" id="41335657"/>
<dbReference type="KEGG" id="ilo:IL0506"/>
<dbReference type="eggNOG" id="COG0682">
    <property type="taxonomic scope" value="Bacteria"/>
</dbReference>
<dbReference type="HOGENOM" id="CLU_013386_1_0_6"/>
<dbReference type="OrthoDB" id="871140at2"/>
<dbReference type="UniPathway" id="UPA00664"/>
<dbReference type="Proteomes" id="UP000001171">
    <property type="component" value="Chromosome"/>
</dbReference>
<dbReference type="GO" id="GO:0005886">
    <property type="term" value="C:plasma membrane"/>
    <property type="evidence" value="ECO:0007669"/>
    <property type="project" value="UniProtKB-SubCell"/>
</dbReference>
<dbReference type="GO" id="GO:0008961">
    <property type="term" value="F:phosphatidylglycerol-prolipoprotein diacylglyceryl transferase activity"/>
    <property type="evidence" value="ECO:0007669"/>
    <property type="project" value="UniProtKB-UniRule"/>
</dbReference>
<dbReference type="GO" id="GO:0042158">
    <property type="term" value="P:lipoprotein biosynthetic process"/>
    <property type="evidence" value="ECO:0007669"/>
    <property type="project" value="UniProtKB-UniRule"/>
</dbReference>
<dbReference type="HAMAP" id="MF_01147">
    <property type="entry name" value="Lgt"/>
    <property type="match status" value="1"/>
</dbReference>
<dbReference type="InterPro" id="IPR001640">
    <property type="entry name" value="Lgt"/>
</dbReference>
<dbReference type="NCBIfam" id="TIGR00544">
    <property type="entry name" value="lgt"/>
    <property type="match status" value="1"/>
</dbReference>
<dbReference type="PANTHER" id="PTHR30589:SF0">
    <property type="entry name" value="PHOSPHATIDYLGLYCEROL--PROLIPOPROTEIN DIACYLGLYCERYL TRANSFERASE"/>
    <property type="match status" value="1"/>
</dbReference>
<dbReference type="PANTHER" id="PTHR30589">
    <property type="entry name" value="PROLIPOPROTEIN DIACYLGLYCERYL TRANSFERASE"/>
    <property type="match status" value="1"/>
</dbReference>
<dbReference type="Pfam" id="PF01790">
    <property type="entry name" value="LGT"/>
    <property type="match status" value="1"/>
</dbReference>
<dbReference type="PROSITE" id="PS01311">
    <property type="entry name" value="LGT"/>
    <property type="match status" value="1"/>
</dbReference>
<accession>Q5R065</accession>
<protein>
    <recommendedName>
        <fullName evidence="1">Phosphatidylglycerol--prolipoprotein diacylglyceryl transferase</fullName>
        <ecNumber evidence="1">2.5.1.145</ecNumber>
    </recommendedName>
</protein>
<sequence>MPSNDYWQFPAIDPVLFHIWGPLDIRWYGLAYIAAFAFAYFWGMRQTKTDPNWSKEEFSDLMFWGFIGVILGGRIGYTLFYHFDYFIDNPLYLFYIHEGGMSFHGGLLGVIAAMYLYARKKQRSFLQVGDFVAPLVPMGLFFGRIGNFINGELWGRAAEVPWAMYFPSGGPVPRHPSQLYEALLEGLLLFAVILWFQRKPRGVGAVSGLFLLGYGVARFIVEFFREPDAHLGLLSLGMSMGQWLTLPMIILGIILMVRAKKQLPTG</sequence>
<proteinExistence type="inferred from homology"/>